<gene>
    <name evidence="1" type="primary">argS</name>
    <name type="ordered locus">BQ07700</name>
</gene>
<name>SYR_BARQU</name>
<reference key="1">
    <citation type="journal article" date="2004" name="Proc. Natl. Acad. Sci. U.S.A.">
        <title>The louse-borne human pathogen Bartonella quintana is a genomic derivative of the zoonotic agent Bartonella henselae.</title>
        <authorList>
            <person name="Alsmark U.C.M."/>
            <person name="Frank A.C."/>
            <person name="Karlberg E.O."/>
            <person name="Legault B.-A."/>
            <person name="Ardell D.H."/>
            <person name="Canbaeck B."/>
            <person name="Eriksson A.-S."/>
            <person name="Naeslund A.K."/>
            <person name="Handley S.A."/>
            <person name="Huvet M."/>
            <person name="La Scola B."/>
            <person name="Holmberg M."/>
            <person name="Andersson S.G.E."/>
        </authorList>
    </citation>
    <scope>NUCLEOTIDE SEQUENCE [LARGE SCALE GENOMIC DNA]</scope>
    <source>
        <strain>Toulouse</strain>
    </source>
</reference>
<sequence>MNVFKNFEKKIKKSLELSDIKGKNGEDLNLSKITVDPPRDSSHGHLSTNAAMVLAKSIGLNPHALAEKIIELLKNDSSIDCIDIAAPGFINIKLTKSFWQDAIKSMLKKGTSYGRIPMGQGKRINVEYVSANPTGPMHVGHCRGAVFGDVLSNLLQFVGYNITKEYYINDAGKQIEVLAHSVLLRYREALGQKINEIPEGLYPGEYLIPLGQSLAQEFSDQLLTIDKDEALSIVKERAIYAMMSMIRKDLAALNIYHDIFFSERMLYADNARAIRNTINDLTLNGYIYKGELPPPKGQNTEDWEPREQTLFRSTDVGDDQDRVLVKSDGSYTYFAADVAYFRDKFNRHFDEMIYILGADHAGYVKRLEAMAKAISGNSAKLSVFLCQLVKLFRNGHPVRMSKRAGSFVTLRDVVEEVGRDPVRFMMLYRKCEAPLDFDFAKVTEQSKDNPIFYVQYASARCHSVFRQAQEIFRIENVSNDTMIAHLNRLTDDNEIFLIRKLSEYPRIIEQAVVHKEPHRLAFYLYDLASSFHAHWNKGSDNFDLRFIQPDDKELSFARLGLIQAIMNILSSGLAIVGIEAATEMR</sequence>
<accession>Q6FZH0</accession>
<proteinExistence type="inferred from homology"/>
<comment type="catalytic activity">
    <reaction evidence="1">
        <text>tRNA(Arg) + L-arginine + ATP = L-arginyl-tRNA(Arg) + AMP + diphosphate</text>
        <dbReference type="Rhea" id="RHEA:20301"/>
        <dbReference type="Rhea" id="RHEA-COMP:9658"/>
        <dbReference type="Rhea" id="RHEA-COMP:9673"/>
        <dbReference type="ChEBI" id="CHEBI:30616"/>
        <dbReference type="ChEBI" id="CHEBI:32682"/>
        <dbReference type="ChEBI" id="CHEBI:33019"/>
        <dbReference type="ChEBI" id="CHEBI:78442"/>
        <dbReference type="ChEBI" id="CHEBI:78513"/>
        <dbReference type="ChEBI" id="CHEBI:456215"/>
        <dbReference type="EC" id="6.1.1.19"/>
    </reaction>
</comment>
<comment type="subunit">
    <text evidence="1">Monomer.</text>
</comment>
<comment type="subcellular location">
    <subcellularLocation>
        <location evidence="1">Cytoplasm</location>
    </subcellularLocation>
</comment>
<comment type="similarity">
    <text evidence="1">Belongs to the class-I aminoacyl-tRNA synthetase family.</text>
</comment>
<protein>
    <recommendedName>
        <fullName evidence="1">Arginine--tRNA ligase</fullName>
        <ecNumber evidence="1">6.1.1.19</ecNumber>
    </recommendedName>
    <alternativeName>
        <fullName evidence="1">Arginyl-tRNA synthetase</fullName>
        <shortName evidence="1">ArgRS</shortName>
    </alternativeName>
</protein>
<organism>
    <name type="scientific">Bartonella quintana (strain Toulouse)</name>
    <name type="common">Rochalimaea quintana</name>
    <dbReference type="NCBI Taxonomy" id="283165"/>
    <lineage>
        <taxon>Bacteria</taxon>
        <taxon>Pseudomonadati</taxon>
        <taxon>Pseudomonadota</taxon>
        <taxon>Alphaproteobacteria</taxon>
        <taxon>Hyphomicrobiales</taxon>
        <taxon>Bartonellaceae</taxon>
        <taxon>Bartonella</taxon>
    </lineage>
</organism>
<feature type="chain" id="PRO_0000241989" description="Arginine--tRNA ligase">
    <location>
        <begin position="1"/>
        <end position="585"/>
    </location>
</feature>
<feature type="short sequence motif" description="'HIGH' region">
    <location>
        <begin position="131"/>
        <end position="141"/>
    </location>
</feature>
<evidence type="ECO:0000255" key="1">
    <source>
        <dbReference type="HAMAP-Rule" id="MF_00123"/>
    </source>
</evidence>
<dbReference type="EC" id="6.1.1.19" evidence="1"/>
<dbReference type="EMBL" id="BX897700">
    <property type="protein sequence ID" value="CAF26254.1"/>
    <property type="molecule type" value="Genomic_DNA"/>
</dbReference>
<dbReference type="RefSeq" id="WP_011179505.1">
    <property type="nucleotide sequence ID" value="NC_005955.1"/>
</dbReference>
<dbReference type="SMR" id="Q6FZH0"/>
<dbReference type="KEGG" id="bqu:BQ07700"/>
<dbReference type="eggNOG" id="COG0018">
    <property type="taxonomic scope" value="Bacteria"/>
</dbReference>
<dbReference type="HOGENOM" id="CLU_006406_0_1_5"/>
<dbReference type="OrthoDB" id="9803211at2"/>
<dbReference type="Proteomes" id="UP000000597">
    <property type="component" value="Chromosome"/>
</dbReference>
<dbReference type="GO" id="GO:0005737">
    <property type="term" value="C:cytoplasm"/>
    <property type="evidence" value="ECO:0007669"/>
    <property type="project" value="UniProtKB-SubCell"/>
</dbReference>
<dbReference type="GO" id="GO:0004814">
    <property type="term" value="F:arginine-tRNA ligase activity"/>
    <property type="evidence" value="ECO:0007669"/>
    <property type="project" value="UniProtKB-UniRule"/>
</dbReference>
<dbReference type="GO" id="GO:0005524">
    <property type="term" value="F:ATP binding"/>
    <property type="evidence" value="ECO:0007669"/>
    <property type="project" value="UniProtKB-UniRule"/>
</dbReference>
<dbReference type="GO" id="GO:0006420">
    <property type="term" value="P:arginyl-tRNA aminoacylation"/>
    <property type="evidence" value="ECO:0007669"/>
    <property type="project" value="UniProtKB-UniRule"/>
</dbReference>
<dbReference type="CDD" id="cd00671">
    <property type="entry name" value="ArgRS_core"/>
    <property type="match status" value="1"/>
</dbReference>
<dbReference type="FunFam" id="3.40.50.620:FF:000062">
    <property type="entry name" value="Arginine--tRNA ligase"/>
    <property type="match status" value="1"/>
</dbReference>
<dbReference type="Gene3D" id="3.30.1360.70">
    <property type="entry name" value="Arginyl tRNA synthetase N-terminal domain"/>
    <property type="match status" value="1"/>
</dbReference>
<dbReference type="Gene3D" id="3.40.50.620">
    <property type="entry name" value="HUPs"/>
    <property type="match status" value="1"/>
</dbReference>
<dbReference type="Gene3D" id="1.10.730.10">
    <property type="entry name" value="Isoleucyl-tRNA Synthetase, Domain 1"/>
    <property type="match status" value="1"/>
</dbReference>
<dbReference type="HAMAP" id="MF_00123">
    <property type="entry name" value="Arg_tRNA_synth"/>
    <property type="match status" value="1"/>
</dbReference>
<dbReference type="InterPro" id="IPR001412">
    <property type="entry name" value="aa-tRNA-synth_I_CS"/>
</dbReference>
<dbReference type="InterPro" id="IPR001278">
    <property type="entry name" value="Arg-tRNA-ligase"/>
</dbReference>
<dbReference type="InterPro" id="IPR005148">
    <property type="entry name" value="Arg-tRNA-synth_N"/>
</dbReference>
<dbReference type="InterPro" id="IPR036695">
    <property type="entry name" value="Arg-tRNA-synth_N_sf"/>
</dbReference>
<dbReference type="InterPro" id="IPR035684">
    <property type="entry name" value="ArgRS_core"/>
</dbReference>
<dbReference type="InterPro" id="IPR008909">
    <property type="entry name" value="DALR_anticod-bd"/>
</dbReference>
<dbReference type="InterPro" id="IPR014729">
    <property type="entry name" value="Rossmann-like_a/b/a_fold"/>
</dbReference>
<dbReference type="InterPro" id="IPR009080">
    <property type="entry name" value="tRNAsynth_Ia_anticodon-bd"/>
</dbReference>
<dbReference type="NCBIfam" id="TIGR00456">
    <property type="entry name" value="argS"/>
    <property type="match status" value="1"/>
</dbReference>
<dbReference type="PANTHER" id="PTHR11956:SF5">
    <property type="entry name" value="ARGININE--TRNA LIGASE, CYTOPLASMIC"/>
    <property type="match status" value="1"/>
</dbReference>
<dbReference type="PANTHER" id="PTHR11956">
    <property type="entry name" value="ARGINYL-TRNA SYNTHETASE"/>
    <property type="match status" value="1"/>
</dbReference>
<dbReference type="Pfam" id="PF03485">
    <property type="entry name" value="Arg_tRNA_synt_N"/>
    <property type="match status" value="1"/>
</dbReference>
<dbReference type="Pfam" id="PF05746">
    <property type="entry name" value="DALR_1"/>
    <property type="match status" value="1"/>
</dbReference>
<dbReference type="Pfam" id="PF00750">
    <property type="entry name" value="tRNA-synt_1d"/>
    <property type="match status" value="2"/>
</dbReference>
<dbReference type="PRINTS" id="PR01038">
    <property type="entry name" value="TRNASYNTHARG"/>
</dbReference>
<dbReference type="SMART" id="SM01016">
    <property type="entry name" value="Arg_tRNA_synt_N"/>
    <property type="match status" value="1"/>
</dbReference>
<dbReference type="SMART" id="SM00836">
    <property type="entry name" value="DALR_1"/>
    <property type="match status" value="1"/>
</dbReference>
<dbReference type="SUPFAM" id="SSF47323">
    <property type="entry name" value="Anticodon-binding domain of a subclass of class I aminoacyl-tRNA synthetases"/>
    <property type="match status" value="1"/>
</dbReference>
<dbReference type="SUPFAM" id="SSF55190">
    <property type="entry name" value="Arginyl-tRNA synthetase (ArgRS), N-terminal 'additional' domain"/>
    <property type="match status" value="1"/>
</dbReference>
<dbReference type="SUPFAM" id="SSF52374">
    <property type="entry name" value="Nucleotidylyl transferase"/>
    <property type="match status" value="1"/>
</dbReference>
<dbReference type="PROSITE" id="PS00178">
    <property type="entry name" value="AA_TRNA_LIGASE_I"/>
    <property type="match status" value="1"/>
</dbReference>
<keyword id="KW-0030">Aminoacyl-tRNA synthetase</keyword>
<keyword id="KW-0067">ATP-binding</keyword>
<keyword id="KW-0963">Cytoplasm</keyword>
<keyword id="KW-0436">Ligase</keyword>
<keyword id="KW-0547">Nucleotide-binding</keyword>
<keyword id="KW-0648">Protein biosynthesis</keyword>